<name>CPFC_STAAS</name>
<sequence length="307" mass="35056">MTKKMGLLVMAYGTPYKESDIEPYYTDIRHGKRPSEEELQDLKDRYEFIGGLSPLAGTTDDQADALVSALNKAYADVEFKLYLGLKHISPFIEDAVEQMHNDGITEAITVVLAPHYSSFSVGSYDKRADEEAAKYGIQLTHVKHYYEQPKFIEYWTNKVNETLAQIPEEEHKDTVLVVSAHSLPKGLIEKNNDPYPQELEHTALLIKEQSNIEHIAIGWQSEGNTGTPWLGPDVQDLTRDLYEKHQYKNFIYTPVGFVCEHLEVLYDNDYECKVVCDDIGANYYRPKMPNTHPLFIGAIVDEIKSIF</sequence>
<comment type="function">
    <text evidence="1">Involved in coproporphyrin-dependent heme b biosynthesis. Catalyzes the insertion of ferrous iron into coproporphyrin III to form Fe-coproporphyrin III.</text>
</comment>
<comment type="catalytic activity">
    <reaction evidence="1">
        <text>Fe-coproporphyrin III + 2 H(+) = coproporphyrin III + Fe(2+)</text>
        <dbReference type="Rhea" id="RHEA:49572"/>
        <dbReference type="ChEBI" id="CHEBI:15378"/>
        <dbReference type="ChEBI" id="CHEBI:29033"/>
        <dbReference type="ChEBI" id="CHEBI:68438"/>
        <dbReference type="ChEBI" id="CHEBI:131725"/>
        <dbReference type="EC" id="4.99.1.9"/>
    </reaction>
    <physiologicalReaction direction="right-to-left" evidence="1">
        <dbReference type="Rhea" id="RHEA:49574"/>
    </physiologicalReaction>
</comment>
<comment type="pathway">
    <text evidence="1">Porphyrin-containing compound metabolism; protoheme biosynthesis.</text>
</comment>
<comment type="subcellular location">
    <subcellularLocation>
        <location evidence="1">Cytoplasm</location>
    </subcellularLocation>
</comment>
<comment type="similarity">
    <text evidence="1">Belongs to the ferrochelatase family.</text>
</comment>
<dbReference type="EC" id="4.99.1.9" evidence="1"/>
<dbReference type="EMBL" id="BX571857">
    <property type="protein sequence ID" value="CAG43558.1"/>
    <property type="molecule type" value="Genomic_DNA"/>
</dbReference>
<dbReference type="SMR" id="Q6G8A3"/>
<dbReference type="KEGG" id="sas:SAS1754"/>
<dbReference type="HOGENOM" id="CLU_018884_2_1_9"/>
<dbReference type="UniPathway" id="UPA00252"/>
<dbReference type="GO" id="GO:0005737">
    <property type="term" value="C:cytoplasm"/>
    <property type="evidence" value="ECO:0007669"/>
    <property type="project" value="UniProtKB-SubCell"/>
</dbReference>
<dbReference type="GO" id="GO:0004325">
    <property type="term" value="F:ferrochelatase activity"/>
    <property type="evidence" value="ECO:0007669"/>
    <property type="project" value="UniProtKB-UniRule"/>
</dbReference>
<dbReference type="GO" id="GO:0046872">
    <property type="term" value="F:metal ion binding"/>
    <property type="evidence" value="ECO:0007669"/>
    <property type="project" value="UniProtKB-KW"/>
</dbReference>
<dbReference type="GO" id="GO:0006783">
    <property type="term" value="P:heme biosynthetic process"/>
    <property type="evidence" value="ECO:0007669"/>
    <property type="project" value="UniProtKB-UniRule"/>
</dbReference>
<dbReference type="CDD" id="cd00419">
    <property type="entry name" value="Ferrochelatase_C"/>
    <property type="match status" value="1"/>
</dbReference>
<dbReference type="CDD" id="cd03411">
    <property type="entry name" value="Ferrochelatase_N"/>
    <property type="match status" value="1"/>
</dbReference>
<dbReference type="FunFam" id="3.40.50.1400:FF:000009">
    <property type="entry name" value="Ferrochelatase"/>
    <property type="match status" value="1"/>
</dbReference>
<dbReference type="Gene3D" id="3.40.50.1400">
    <property type="match status" value="2"/>
</dbReference>
<dbReference type="HAMAP" id="MF_00323">
    <property type="entry name" value="Ferrochelatase"/>
    <property type="match status" value="1"/>
</dbReference>
<dbReference type="InterPro" id="IPR001015">
    <property type="entry name" value="Ferrochelatase"/>
</dbReference>
<dbReference type="InterPro" id="IPR019772">
    <property type="entry name" value="Ferrochelatase_AS"/>
</dbReference>
<dbReference type="InterPro" id="IPR033644">
    <property type="entry name" value="Ferrochelatase_C"/>
</dbReference>
<dbReference type="InterPro" id="IPR033659">
    <property type="entry name" value="Ferrochelatase_N"/>
</dbReference>
<dbReference type="NCBIfam" id="TIGR00109">
    <property type="entry name" value="hemH"/>
    <property type="match status" value="1"/>
</dbReference>
<dbReference type="NCBIfam" id="NF009095">
    <property type="entry name" value="PRK12435.1"/>
    <property type="match status" value="1"/>
</dbReference>
<dbReference type="PANTHER" id="PTHR11108">
    <property type="entry name" value="FERROCHELATASE"/>
    <property type="match status" value="1"/>
</dbReference>
<dbReference type="PANTHER" id="PTHR11108:SF1">
    <property type="entry name" value="FERROCHELATASE, MITOCHONDRIAL"/>
    <property type="match status" value="1"/>
</dbReference>
<dbReference type="Pfam" id="PF00762">
    <property type="entry name" value="Ferrochelatase"/>
    <property type="match status" value="1"/>
</dbReference>
<dbReference type="SUPFAM" id="SSF53800">
    <property type="entry name" value="Chelatase"/>
    <property type="match status" value="1"/>
</dbReference>
<dbReference type="PROSITE" id="PS00534">
    <property type="entry name" value="FERROCHELATASE"/>
    <property type="match status" value="1"/>
</dbReference>
<accession>Q6G8A3</accession>
<evidence type="ECO:0000255" key="1">
    <source>
        <dbReference type="HAMAP-Rule" id="MF_00323"/>
    </source>
</evidence>
<feature type="chain" id="PRO_0000175205" description="Coproporphyrin III ferrochelatase">
    <location>
        <begin position="1"/>
        <end position="307"/>
    </location>
</feature>
<feature type="binding site" description="axial binding residue" evidence="1">
    <location>
        <position position="12"/>
    </location>
    <ligand>
        <name>Fe-coproporphyrin III</name>
        <dbReference type="ChEBI" id="CHEBI:68438"/>
    </ligand>
    <ligandPart>
        <name>Fe</name>
        <dbReference type="ChEBI" id="CHEBI:18248"/>
    </ligandPart>
</feature>
<feature type="binding site" evidence="1">
    <location>
        <position position="29"/>
    </location>
    <ligand>
        <name>Fe-coproporphyrin III</name>
        <dbReference type="ChEBI" id="CHEBI:68438"/>
    </ligand>
</feature>
<feature type="binding site" evidence="1">
    <location>
        <begin position="45"/>
        <end position="46"/>
    </location>
    <ligand>
        <name>Fe-coproporphyrin III</name>
        <dbReference type="ChEBI" id="CHEBI:68438"/>
    </ligand>
</feature>
<feature type="binding site" evidence="1">
    <location>
        <position position="53"/>
    </location>
    <ligand>
        <name>Fe-coproporphyrin III</name>
        <dbReference type="ChEBI" id="CHEBI:68438"/>
    </ligand>
</feature>
<feature type="binding site" evidence="1">
    <location>
        <position position="124"/>
    </location>
    <ligand>
        <name>Fe-coproporphyrin III</name>
        <dbReference type="ChEBI" id="CHEBI:68438"/>
    </ligand>
</feature>
<feature type="binding site" evidence="1">
    <location>
        <position position="181"/>
    </location>
    <ligand>
        <name>Fe(2+)</name>
        <dbReference type="ChEBI" id="CHEBI:29033"/>
    </ligand>
</feature>
<feature type="binding site" evidence="1">
    <location>
        <position position="263"/>
    </location>
    <ligand>
        <name>Fe(2+)</name>
        <dbReference type="ChEBI" id="CHEBI:29033"/>
    </ligand>
</feature>
<proteinExistence type="inferred from homology"/>
<keyword id="KW-0963">Cytoplasm</keyword>
<keyword id="KW-0350">Heme biosynthesis</keyword>
<keyword id="KW-0408">Iron</keyword>
<keyword id="KW-0456">Lyase</keyword>
<keyword id="KW-0479">Metal-binding</keyword>
<keyword id="KW-0627">Porphyrin biosynthesis</keyword>
<protein>
    <recommendedName>
        <fullName evidence="1">Coproporphyrin III ferrochelatase</fullName>
        <ecNumber evidence="1">4.99.1.9</ecNumber>
    </recommendedName>
</protein>
<organism>
    <name type="scientific">Staphylococcus aureus (strain MSSA476)</name>
    <dbReference type="NCBI Taxonomy" id="282459"/>
    <lineage>
        <taxon>Bacteria</taxon>
        <taxon>Bacillati</taxon>
        <taxon>Bacillota</taxon>
        <taxon>Bacilli</taxon>
        <taxon>Bacillales</taxon>
        <taxon>Staphylococcaceae</taxon>
        <taxon>Staphylococcus</taxon>
    </lineage>
</organism>
<gene>
    <name evidence="1" type="primary">cpfC</name>
    <name type="ordered locus">SAS1754</name>
</gene>
<reference key="1">
    <citation type="journal article" date="2004" name="Proc. Natl. Acad. Sci. U.S.A.">
        <title>Complete genomes of two clinical Staphylococcus aureus strains: evidence for the rapid evolution of virulence and drug resistance.</title>
        <authorList>
            <person name="Holden M.T.G."/>
            <person name="Feil E.J."/>
            <person name="Lindsay J.A."/>
            <person name="Peacock S.J."/>
            <person name="Day N.P.J."/>
            <person name="Enright M.C."/>
            <person name="Foster T.J."/>
            <person name="Moore C.E."/>
            <person name="Hurst L."/>
            <person name="Atkin R."/>
            <person name="Barron A."/>
            <person name="Bason N."/>
            <person name="Bentley S.D."/>
            <person name="Chillingworth C."/>
            <person name="Chillingworth T."/>
            <person name="Churcher C."/>
            <person name="Clark L."/>
            <person name="Corton C."/>
            <person name="Cronin A."/>
            <person name="Doggett J."/>
            <person name="Dowd L."/>
            <person name="Feltwell T."/>
            <person name="Hance Z."/>
            <person name="Harris B."/>
            <person name="Hauser H."/>
            <person name="Holroyd S."/>
            <person name="Jagels K."/>
            <person name="James K.D."/>
            <person name="Lennard N."/>
            <person name="Line A."/>
            <person name="Mayes R."/>
            <person name="Moule S."/>
            <person name="Mungall K."/>
            <person name="Ormond D."/>
            <person name="Quail M.A."/>
            <person name="Rabbinowitsch E."/>
            <person name="Rutherford K.M."/>
            <person name="Sanders M."/>
            <person name="Sharp S."/>
            <person name="Simmonds M."/>
            <person name="Stevens K."/>
            <person name="Whitehead S."/>
            <person name="Barrell B.G."/>
            <person name="Spratt B.G."/>
            <person name="Parkhill J."/>
        </authorList>
    </citation>
    <scope>NUCLEOTIDE SEQUENCE [LARGE SCALE GENOMIC DNA]</scope>
    <source>
        <strain>MSSA476</strain>
    </source>
</reference>